<accession>Q465T0</accession>
<sequence>MFSKSEFREVVKSMGLVFGDIGTSPIYTLTVIFLLTRPTHTHIIGVLSLIIWTLIILVTVEYAWLAMSLGKKGEGGTIVLKEILVPLLKSSRNVAFVTLLAYIGTSFLMGDGVITPAISILSAVEGLRIIPQFENIGQSTIILISAAIAIALFSVQSKGIEKITWVFGPIMVLWFATIGFSGIASIFYTPEVLKAINPYYAIRFLLDNGIIGFFVLSEVILCATGGEALYADMGHLGREPILKAWRFVFLALVLNYLGQGAFLIRNPGSTNFLFEMINQQANILYIPFLLLSVVATIIASQAMISGMFSIVYQGITTRIIPMLKIDYTSGVFKSQIYISTVNWLLLVSVLFMMLIFKESSKLAAAYGLAVTGTMSITGIMMTSIFYHRKNITKALISLFITFIDVVFLLSNSYKIPHGGYWSVIIALFILSLILIYTSGQKKLYKLMKLMKSKDFLEKYKQVYATQNKIMGTALFFTRDIERIPQYISHVMFKNNIIYENNIFISIIKSDSPFGIETSFTKEPAKGLKILEIRAGYMEIVNVEKILKDQGIGEKTIFYGVEDIFTKNIIWRIFSIIKKVSPSFVQFYKLPTDELHGVMTRFEM</sequence>
<name>KUP_METBF</name>
<proteinExistence type="inferred from homology"/>
<keyword id="KW-1003">Cell membrane</keyword>
<keyword id="KW-0406">Ion transport</keyword>
<keyword id="KW-0472">Membrane</keyword>
<keyword id="KW-0630">Potassium</keyword>
<keyword id="KW-0633">Potassium transport</keyword>
<keyword id="KW-0769">Symport</keyword>
<keyword id="KW-0812">Transmembrane</keyword>
<keyword id="KW-1133">Transmembrane helix</keyword>
<keyword id="KW-0813">Transport</keyword>
<reference key="1">
    <citation type="journal article" date="2006" name="J. Bacteriol.">
        <title>The Methanosarcina barkeri genome: comparative analysis with Methanosarcina acetivorans and Methanosarcina mazei reveals extensive rearrangement within methanosarcinal genomes.</title>
        <authorList>
            <person name="Maeder D.L."/>
            <person name="Anderson I."/>
            <person name="Brettin T.S."/>
            <person name="Bruce D.C."/>
            <person name="Gilna P."/>
            <person name="Han C.S."/>
            <person name="Lapidus A."/>
            <person name="Metcalf W.W."/>
            <person name="Saunders E."/>
            <person name="Tapia R."/>
            <person name="Sowers K.R."/>
        </authorList>
    </citation>
    <scope>NUCLEOTIDE SEQUENCE [LARGE SCALE GENOMIC DNA]</scope>
    <source>
        <strain>Fusaro / DSM 804</strain>
    </source>
</reference>
<feature type="chain" id="PRO_0000279847" description="Probable potassium transport system protein Kup">
    <location>
        <begin position="1"/>
        <end position="603"/>
    </location>
</feature>
<feature type="transmembrane region" description="Helical" evidence="1">
    <location>
        <begin position="15"/>
        <end position="35"/>
    </location>
</feature>
<feature type="transmembrane region" description="Helical" evidence="1">
    <location>
        <begin position="43"/>
        <end position="63"/>
    </location>
</feature>
<feature type="transmembrane region" description="Helical" evidence="1">
    <location>
        <begin position="94"/>
        <end position="114"/>
    </location>
</feature>
<feature type="transmembrane region" description="Helical" evidence="1">
    <location>
        <begin position="135"/>
        <end position="155"/>
    </location>
</feature>
<feature type="transmembrane region" description="Helical" evidence="1">
    <location>
        <begin position="163"/>
        <end position="183"/>
    </location>
</feature>
<feature type="transmembrane region" description="Helical" evidence="1">
    <location>
        <begin position="209"/>
        <end position="229"/>
    </location>
</feature>
<feature type="transmembrane region" description="Helical" evidence="1">
    <location>
        <begin position="244"/>
        <end position="264"/>
    </location>
</feature>
<feature type="transmembrane region" description="Helical" evidence="1">
    <location>
        <begin position="283"/>
        <end position="303"/>
    </location>
</feature>
<feature type="transmembrane region" description="Helical" evidence="1">
    <location>
        <begin position="336"/>
        <end position="356"/>
    </location>
</feature>
<feature type="transmembrane region" description="Helical" evidence="1">
    <location>
        <begin position="365"/>
        <end position="385"/>
    </location>
</feature>
<feature type="transmembrane region" description="Helical" evidence="1">
    <location>
        <begin position="390"/>
        <end position="410"/>
    </location>
</feature>
<feature type="transmembrane region" description="Helical" evidence="1">
    <location>
        <begin position="415"/>
        <end position="435"/>
    </location>
</feature>
<comment type="function">
    <text evidence="1">Transport of potassium into the cell. Likely operates as a K(+):H(+) symporter.</text>
</comment>
<comment type="catalytic activity">
    <reaction evidence="1">
        <text>K(+)(in) + H(+)(in) = K(+)(out) + H(+)(out)</text>
        <dbReference type="Rhea" id="RHEA:28490"/>
        <dbReference type="ChEBI" id="CHEBI:15378"/>
        <dbReference type="ChEBI" id="CHEBI:29103"/>
    </reaction>
    <physiologicalReaction direction="right-to-left" evidence="1">
        <dbReference type="Rhea" id="RHEA:28492"/>
    </physiologicalReaction>
</comment>
<comment type="subcellular location">
    <subcellularLocation>
        <location evidence="1">Cell membrane</location>
        <topology evidence="1">Multi-pass membrane protein</topology>
    </subcellularLocation>
</comment>
<comment type="similarity">
    <text evidence="1">Belongs to the HAK/KUP transporter (TC 2.A.72) family.</text>
</comment>
<gene>
    <name evidence="1" type="primary">kup</name>
    <name type="ordered locus">Mbar_A3491</name>
</gene>
<evidence type="ECO:0000255" key="1">
    <source>
        <dbReference type="HAMAP-Rule" id="MF_01522"/>
    </source>
</evidence>
<dbReference type="EMBL" id="CP000099">
    <property type="protein sequence ID" value="AAZ72362.1"/>
    <property type="molecule type" value="Genomic_DNA"/>
</dbReference>
<dbReference type="STRING" id="269797.Mbar_A3491"/>
<dbReference type="PaxDb" id="269797-Mbar_A3491"/>
<dbReference type="KEGG" id="mba:Mbar_A3491"/>
<dbReference type="eggNOG" id="arCOG05242">
    <property type="taxonomic scope" value="Archaea"/>
</dbReference>
<dbReference type="HOGENOM" id="CLU_008142_4_2_2"/>
<dbReference type="OrthoDB" id="115647at2157"/>
<dbReference type="GO" id="GO:0005886">
    <property type="term" value="C:plasma membrane"/>
    <property type="evidence" value="ECO:0007669"/>
    <property type="project" value="UniProtKB-SubCell"/>
</dbReference>
<dbReference type="GO" id="GO:0015079">
    <property type="term" value="F:potassium ion transmembrane transporter activity"/>
    <property type="evidence" value="ECO:0007669"/>
    <property type="project" value="UniProtKB-UniRule"/>
</dbReference>
<dbReference type="GO" id="GO:0015293">
    <property type="term" value="F:symporter activity"/>
    <property type="evidence" value="ECO:0007669"/>
    <property type="project" value="UniProtKB-UniRule"/>
</dbReference>
<dbReference type="HAMAP" id="MF_01522">
    <property type="entry name" value="Kup"/>
    <property type="match status" value="1"/>
</dbReference>
<dbReference type="InterPro" id="IPR003855">
    <property type="entry name" value="K+_transporter"/>
</dbReference>
<dbReference type="InterPro" id="IPR053952">
    <property type="entry name" value="K_trans_C"/>
</dbReference>
<dbReference type="InterPro" id="IPR053951">
    <property type="entry name" value="K_trans_N"/>
</dbReference>
<dbReference type="InterPro" id="IPR023051">
    <property type="entry name" value="Kup"/>
</dbReference>
<dbReference type="PANTHER" id="PTHR30540:SF83">
    <property type="entry name" value="K+ POTASSIUM TRANSPORTER"/>
    <property type="match status" value="1"/>
</dbReference>
<dbReference type="PANTHER" id="PTHR30540">
    <property type="entry name" value="OSMOTIC STRESS POTASSIUM TRANSPORTER"/>
    <property type="match status" value="1"/>
</dbReference>
<dbReference type="Pfam" id="PF02705">
    <property type="entry name" value="K_trans"/>
    <property type="match status" value="1"/>
</dbReference>
<dbReference type="Pfam" id="PF22776">
    <property type="entry name" value="K_trans_C"/>
    <property type="match status" value="1"/>
</dbReference>
<organism>
    <name type="scientific">Methanosarcina barkeri (strain Fusaro / DSM 804)</name>
    <dbReference type="NCBI Taxonomy" id="269797"/>
    <lineage>
        <taxon>Archaea</taxon>
        <taxon>Methanobacteriati</taxon>
        <taxon>Methanobacteriota</taxon>
        <taxon>Stenosarchaea group</taxon>
        <taxon>Methanomicrobia</taxon>
        <taxon>Methanosarcinales</taxon>
        <taxon>Methanosarcinaceae</taxon>
        <taxon>Methanosarcina</taxon>
    </lineage>
</organism>
<protein>
    <recommendedName>
        <fullName evidence="1">Probable potassium transport system protein Kup</fullName>
    </recommendedName>
</protein>